<comment type="catalytic activity">
    <reaction evidence="1">
        <text>1-(5-phospho-beta-D-ribosyl)-5-[(5-phospho-beta-D-ribosylamino)methylideneamino]imidazole-4-carboxamide = 5-[(5-phospho-1-deoxy-D-ribulos-1-ylimino)methylamino]-1-(5-phospho-beta-D-ribosyl)imidazole-4-carboxamide</text>
        <dbReference type="Rhea" id="RHEA:15469"/>
        <dbReference type="ChEBI" id="CHEBI:58435"/>
        <dbReference type="ChEBI" id="CHEBI:58525"/>
        <dbReference type="EC" id="5.3.1.16"/>
    </reaction>
</comment>
<comment type="pathway">
    <text evidence="1">Amino-acid biosynthesis; L-histidine biosynthesis; L-histidine from 5-phospho-alpha-D-ribose 1-diphosphate: step 4/9.</text>
</comment>
<comment type="subcellular location">
    <subcellularLocation>
        <location evidence="1">Cytoplasm</location>
    </subcellularLocation>
</comment>
<comment type="similarity">
    <text evidence="1">Belongs to the HisA/HisF family.</text>
</comment>
<organism>
    <name type="scientific">Burkholderia thailandensis (strain ATCC 700388 / DSM 13276 / CCUG 48851 / CIP 106301 / E264)</name>
    <dbReference type="NCBI Taxonomy" id="271848"/>
    <lineage>
        <taxon>Bacteria</taxon>
        <taxon>Pseudomonadati</taxon>
        <taxon>Pseudomonadota</taxon>
        <taxon>Betaproteobacteria</taxon>
        <taxon>Burkholderiales</taxon>
        <taxon>Burkholderiaceae</taxon>
        <taxon>Burkholderia</taxon>
        <taxon>pseudomallei group</taxon>
    </lineage>
</organism>
<keyword id="KW-0028">Amino-acid biosynthesis</keyword>
<keyword id="KW-0963">Cytoplasm</keyword>
<keyword id="KW-0368">Histidine biosynthesis</keyword>
<keyword id="KW-0413">Isomerase</keyword>
<evidence type="ECO:0000255" key="1">
    <source>
        <dbReference type="HAMAP-Rule" id="MF_01014"/>
    </source>
</evidence>
<reference key="1">
    <citation type="journal article" date="2005" name="BMC Genomics">
        <title>Bacterial genome adaptation to niches: divergence of the potential virulence genes in three Burkholderia species of different survival strategies.</title>
        <authorList>
            <person name="Kim H.S."/>
            <person name="Schell M.A."/>
            <person name="Yu Y."/>
            <person name="Ulrich R.L."/>
            <person name="Sarria S.H."/>
            <person name="Nierman W.C."/>
            <person name="DeShazer D."/>
        </authorList>
    </citation>
    <scope>NUCLEOTIDE SEQUENCE [LARGE SCALE GENOMIC DNA]</scope>
    <source>
        <strain>ATCC 700388 / DSM 13276 / CCUG 48851 / CIP 106301 / E264</strain>
    </source>
</reference>
<feature type="chain" id="PRO_0000290458" description="1-(5-phosphoribosyl)-5-[(5-phosphoribosylamino)methylideneamino] imidazole-4-carboxamide isomerase">
    <location>
        <begin position="1"/>
        <end position="251"/>
    </location>
</feature>
<feature type="active site" description="Proton acceptor" evidence="1">
    <location>
        <position position="8"/>
    </location>
</feature>
<feature type="active site" description="Proton donor" evidence="1">
    <location>
        <position position="131"/>
    </location>
</feature>
<protein>
    <recommendedName>
        <fullName evidence="1">1-(5-phosphoribosyl)-5-[(5-phosphoribosylamino)methylideneamino] imidazole-4-carboxamide isomerase</fullName>
        <ecNumber evidence="1">5.3.1.16</ecNumber>
    </recommendedName>
    <alternativeName>
        <fullName evidence="1">Phosphoribosylformimino-5-aminoimidazole carboxamide ribotide isomerase</fullName>
    </alternativeName>
</protein>
<name>HIS4_BURTA</name>
<accession>Q2SUA7</accession>
<sequence length="251" mass="26588">MLLIPAIDLKDGQCVRLKQGDMDQATIFSEDPAAMARKWVDLGARRLHLVDLNGAFAGKPKNLEAIEAILGEVGDEIPVQLGGGIRSLETIEKYLDAGLSYVIIGTAAVKDPGFLRDACSAFAGNIIVGLDAKDGKVATDGWSKLTGHEVIDLAQKFEDYGVESIVYTDIGRDGMLQGINIEATVKLAQAVGIPVIASGGLSNIVDIEKLCEVEDEGIEGVICGRAIYSGDLDFAAAQKRADELNGELDDA</sequence>
<dbReference type="EC" id="5.3.1.16" evidence="1"/>
<dbReference type="EMBL" id="CP000086">
    <property type="protein sequence ID" value="ABC37752.1"/>
    <property type="molecule type" value="Genomic_DNA"/>
</dbReference>
<dbReference type="RefSeq" id="WP_009888536.1">
    <property type="nucleotide sequence ID" value="NZ_CP008786.1"/>
</dbReference>
<dbReference type="SMR" id="Q2SUA7"/>
<dbReference type="GeneID" id="45122676"/>
<dbReference type="KEGG" id="bte:BTH_I2988"/>
<dbReference type="HOGENOM" id="CLU_048577_1_1_4"/>
<dbReference type="UniPathway" id="UPA00031">
    <property type="reaction ID" value="UER00009"/>
</dbReference>
<dbReference type="Proteomes" id="UP000001930">
    <property type="component" value="Chromosome I"/>
</dbReference>
<dbReference type="GO" id="GO:0005737">
    <property type="term" value="C:cytoplasm"/>
    <property type="evidence" value="ECO:0007669"/>
    <property type="project" value="UniProtKB-SubCell"/>
</dbReference>
<dbReference type="GO" id="GO:0003949">
    <property type="term" value="F:1-(5-phosphoribosyl)-5-[(5-phosphoribosylamino)methylideneamino]imidazole-4-carboxamide isomerase activity"/>
    <property type="evidence" value="ECO:0007669"/>
    <property type="project" value="UniProtKB-UniRule"/>
</dbReference>
<dbReference type="GO" id="GO:0000105">
    <property type="term" value="P:L-histidine biosynthetic process"/>
    <property type="evidence" value="ECO:0007669"/>
    <property type="project" value="UniProtKB-UniRule"/>
</dbReference>
<dbReference type="GO" id="GO:0000162">
    <property type="term" value="P:L-tryptophan biosynthetic process"/>
    <property type="evidence" value="ECO:0007669"/>
    <property type="project" value="TreeGrafter"/>
</dbReference>
<dbReference type="CDD" id="cd04732">
    <property type="entry name" value="HisA"/>
    <property type="match status" value="1"/>
</dbReference>
<dbReference type="FunFam" id="3.20.20.70:FF:000009">
    <property type="entry name" value="1-(5-phosphoribosyl)-5-[(5-phosphoribosylamino)methylideneamino] imidazole-4-carboxamide isomerase"/>
    <property type="match status" value="1"/>
</dbReference>
<dbReference type="Gene3D" id="3.20.20.70">
    <property type="entry name" value="Aldolase class I"/>
    <property type="match status" value="1"/>
</dbReference>
<dbReference type="HAMAP" id="MF_01014">
    <property type="entry name" value="HisA"/>
    <property type="match status" value="1"/>
</dbReference>
<dbReference type="InterPro" id="IPR013785">
    <property type="entry name" value="Aldolase_TIM"/>
</dbReference>
<dbReference type="InterPro" id="IPR006062">
    <property type="entry name" value="His_biosynth"/>
</dbReference>
<dbReference type="InterPro" id="IPR006063">
    <property type="entry name" value="HisA_bact_arch"/>
</dbReference>
<dbReference type="InterPro" id="IPR044524">
    <property type="entry name" value="Isoase_HisA-like"/>
</dbReference>
<dbReference type="InterPro" id="IPR023016">
    <property type="entry name" value="Isoase_HisA-like_bact"/>
</dbReference>
<dbReference type="InterPro" id="IPR011060">
    <property type="entry name" value="RibuloseP-bd_barrel"/>
</dbReference>
<dbReference type="NCBIfam" id="TIGR00007">
    <property type="entry name" value="1-(5-phosphoribosyl)-5-[(5-phosphoribosylamino)methylideneamino]imidazole-4-carboxamide isomerase"/>
    <property type="match status" value="1"/>
</dbReference>
<dbReference type="NCBIfam" id="NF010112">
    <property type="entry name" value="PRK13585.1"/>
    <property type="match status" value="1"/>
</dbReference>
<dbReference type="PANTHER" id="PTHR43090">
    <property type="entry name" value="1-(5-PHOSPHORIBOSYL)-5-[(5-PHOSPHORIBOSYLAMINO)METHYLIDENEAMINO] IMIDAZOLE-4-CARBOXAMIDE ISOMERASE"/>
    <property type="match status" value="1"/>
</dbReference>
<dbReference type="PANTHER" id="PTHR43090:SF2">
    <property type="entry name" value="1-(5-PHOSPHORIBOSYL)-5-[(5-PHOSPHORIBOSYLAMINO)METHYLIDENEAMINO] IMIDAZOLE-4-CARBOXAMIDE ISOMERASE"/>
    <property type="match status" value="1"/>
</dbReference>
<dbReference type="Pfam" id="PF00977">
    <property type="entry name" value="His_biosynth"/>
    <property type="match status" value="1"/>
</dbReference>
<dbReference type="SUPFAM" id="SSF51366">
    <property type="entry name" value="Ribulose-phoshate binding barrel"/>
    <property type="match status" value="1"/>
</dbReference>
<proteinExistence type="inferred from homology"/>
<gene>
    <name evidence="1" type="primary">hisA</name>
    <name type="ordered locus">BTH_I2988</name>
</gene>